<organism>
    <name type="scientific">Saccharomyces cerevisiae (strain ATCC 204508 / S288c)</name>
    <name type="common">Baker's yeast</name>
    <dbReference type="NCBI Taxonomy" id="559292"/>
    <lineage>
        <taxon>Eukaryota</taxon>
        <taxon>Fungi</taxon>
        <taxon>Dikarya</taxon>
        <taxon>Ascomycota</taxon>
        <taxon>Saccharomycotina</taxon>
        <taxon>Saccharomycetes</taxon>
        <taxon>Saccharomycetales</taxon>
        <taxon>Saccharomycetaceae</taxon>
        <taxon>Saccharomyces</taxon>
    </lineage>
</organism>
<comment type="function">
    <text evidence="3">Component of MIOREX complexes, large expressome-like assemblies of ribosomes with factors involved in all the steps of post-transcriptional gene expression.</text>
</comment>
<comment type="subunit">
    <text evidence="3">Associates with the mitochondrial ribosome.</text>
</comment>
<comment type="subcellular location">
    <subcellularLocation>
        <location evidence="4">Mitochondrion</location>
    </subcellularLocation>
    <subcellularLocation>
        <location evidence="3">Mitochondrion inner membrane</location>
        <topology evidence="1">Multi-pass membrane protein</topology>
    </subcellularLocation>
</comment>
<comment type="similarity">
    <text evidence="6">Belongs to the MRX11 family.</text>
</comment>
<evidence type="ECO:0000255" key="1"/>
<evidence type="ECO:0000269" key="2">
    <source>
    </source>
</evidence>
<evidence type="ECO:0000269" key="3">
    <source>
    </source>
</evidence>
<evidence type="ECO:0000269" key="4">
    <source>
    </source>
</evidence>
<evidence type="ECO:0000303" key="5">
    <source>
    </source>
</evidence>
<evidence type="ECO:0000305" key="6"/>
<evidence type="ECO:0000305" key="7">
    <source>
    </source>
</evidence>
<evidence type="ECO:0000305" key="8">
    <source>
    </source>
</evidence>
<evidence type="ECO:0000312" key="9">
    <source>
        <dbReference type="SGD" id="S000005962"/>
    </source>
</evidence>
<feature type="transit peptide" description="Mitochondrion" evidence="1">
    <location>
        <begin position="1"/>
        <end position="46"/>
    </location>
</feature>
<feature type="chain" id="PRO_0000238638" description="MIOREX complex component 11">
    <location>
        <begin position="47"/>
        <end position="207"/>
    </location>
</feature>
<feature type="topological domain" description="Mitochondrial matrix" evidence="7">
    <location>
        <begin position="47"/>
        <end position="98"/>
    </location>
</feature>
<feature type="transmembrane region" description="Helical" evidence="1">
    <location>
        <begin position="99"/>
        <end position="119"/>
    </location>
</feature>
<feature type="topological domain" description="Mitochondrial intermembrane" evidence="7">
    <location>
        <begin position="120"/>
        <end position="177"/>
    </location>
</feature>
<feature type="transmembrane region" description="Helical" evidence="1">
    <location>
        <begin position="178"/>
        <end position="198"/>
    </location>
</feature>
<feature type="topological domain" description="Mitochondrial matrix" evidence="2">
    <location>
        <begin position="199"/>
        <end position="207"/>
    </location>
</feature>
<feature type="sequence conflict" description="In Ref. 1; AAT01100." evidence="6" ref="1">
    <original>ILPLF</original>
    <variation>NTTTV</variation>
    <location>
        <begin position="108"/>
        <end position="112"/>
    </location>
</feature>
<dbReference type="EMBL" id="L32174">
    <property type="protein sequence ID" value="AAT01100.1"/>
    <property type="molecule type" value="Genomic_DNA"/>
</dbReference>
<dbReference type="EMBL" id="U44030">
    <property type="protein sequence ID" value="AAB68179.1"/>
    <property type="molecule type" value="Genomic_DNA"/>
</dbReference>
<dbReference type="EMBL" id="AY558328">
    <property type="protein sequence ID" value="AAS56654.1"/>
    <property type="molecule type" value="Genomic_DNA"/>
</dbReference>
<dbReference type="EMBL" id="BK006949">
    <property type="protein sequence ID" value="DAA11388.1"/>
    <property type="molecule type" value="Genomic_DNA"/>
</dbReference>
<dbReference type="PIR" id="S62034">
    <property type="entry name" value="S62034"/>
</dbReference>
<dbReference type="RefSeq" id="NP_015284.1">
    <property type="nucleotide sequence ID" value="NM_001183855.1"/>
</dbReference>
<dbReference type="BioGRID" id="36138">
    <property type="interactions" value="174"/>
</dbReference>
<dbReference type="FunCoup" id="Q03079">
    <property type="interactions" value="24"/>
</dbReference>
<dbReference type="STRING" id="4932.YPL041C"/>
<dbReference type="PaxDb" id="4932-YPL041C"/>
<dbReference type="PeptideAtlas" id="Q03079"/>
<dbReference type="EnsemblFungi" id="YPL041C_mRNA">
    <property type="protein sequence ID" value="YPL041C"/>
    <property type="gene ID" value="YPL041C"/>
</dbReference>
<dbReference type="GeneID" id="856066"/>
<dbReference type="KEGG" id="sce:YPL041C"/>
<dbReference type="AGR" id="SGD:S000005962"/>
<dbReference type="SGD" id="S000005962">
    <property type="gene designation" value="MRX11"/>
</dbReference>
<dbReference type="VEuPathDB" id="FungiDB:YPL041C"/>
<dbReference type="eggNOG" id="ENOG502S09K">
    <property type="taxonomic scope" value="Eukaryota"/>
</dbReference>
<dbReference type="HOGENOM" id="CLU_071379_3_0_1"/>
<dbReference type="InParanoid" id="Q03079"/>
<dbReference type="OMA" id="YAYVIVK"/>
<dbReference type="OrthoDB" id="5580261at2759"/>
<dbReference type="BioCyc" id="YEAST:G3O-33955-MONOMER"/>
<dbReference type="BioGRID-ORCS" id="856066">
    <property type="hits" value="1 hit in 10 CRISPR screens"/>
</dbReference>
<dbReference type="PRO" id="PR:Q03079"/>
<dbReference type="Proteomes" id="UP000002311">
    <property type="component" value="Chromosome XVI"/>
</dbReference>
<dbReference type="RNAct" id="Q03079">
    <property type="molecule type" value="protein"/>
</dbReference>
<dbReference type="GO" id="GO:0005741">
    <property type="term" value="C:mitochondrial outer membrane"/>
    <property type="evidence" value="ECO:0007669"/>
    <property type="project" value="UniProtKB-SubCell"/>
</dbReference>
<dbReference type="GO" id="GO:0005739">
    <property type="term" value="C:mitochondrion"/>
    <property type="evidence" value="ECO:0007005"/>
    <property type="project" value="SGD"/>
</dbReference>
<dbReference type="InterPro" id="IPR018811">
    <property type="entry name" value="Mrx11"/>
</dbReference>
<dbReference type="PANTHER" id="PTHR28002">
    <property type="entry name" value="MIOREX COMPLEX COMPONENT 11"/>
    <property type="match status" value="1"/>
</dbReference>
<dbReference type="PANTHER" id="PTHR28002:SF1">
    <property type="entry name" value="MIOREX COMPLEX COMPONENT 11"/>
    <property type="match status" value="1"/>
</dbReference>
<dbReference type="Pfam" id="PF10306">
    <property type="entry name" value="FLILHELTA"/>
    <property type="match status" value="1"/>
</dbReference>
<reference key="1">
    <citation type="submission" date="2004-04" db="EMBL/GenBank/DDBJ databases">
        <title>The LAF1 open reading frame encodes a second isoleucyl tRNA synthetase in the yeast Saccharomyces cerevisiae.</title>
        <authorList>
            <person name="Chen E."/>
            <person name="Bretscher A.P."/>
        </authorList>
    </citation>
    <scope>NUCLEOTIDE SEQUENCE [GENOMIC DNA]</scope>
</reference>
<reference key="2">
    <citation type="journal article" date="1997" name="Nature">
        <title>The nucleotide sequence of Saccharomyces cerevisiae chromosome XVI.</title>
        <authorList>
            <person name="Bussey H."/>
            <person name="Storms R.K."/>
            <person name="Ahmed A."/>
            <person name="Albermann K."/>
            <person name="Allen E."/>
            <person name="Ansorge W."/>
            <person name="Araujo R."/>
            <person name="Aparicio A."/>
            <person name="Barrell B.G."/>
            <person name="Badcock K."/>
            <person name="Benes V."/>
            <person name="Botstein D."/>
            <person name="Bowman S."/>
            <person name="Brueckner M."/>
            <person name="Carpenter J."/>
            <person name="Cherry J.M."/>
            <person name="Chung E."/>
            <person name="Churcher C.M."/>
            <person name="Coster F."/>
            <person name="Davis K."/>
            <person name="Davis R.W."/>
            <person name="Dietrich F.S."/>
            <person name="Delius H."/>
            <person name="DiPaolo T."/>
            <person name="Dubois E."/>
            <person name="Duesterhoeft A."/>
            <person name="Duncan M."/>
            <person name="Floeth M."/>
            <person name="Fortin N."/>
            <person name="Friesen J.D."/>
            <person name="Fritz C."/>
            <person name="Goffeau A."/>
            <person name="Hall J."/>
            <person name="Hebling U."/>
            <person name="Heumann K."/>
            <person name="Hilbert H."/>
            <person name="Hillier L.W."/>
            <person name="Hunicke-Smith S."/>
            <person name="Hyman R.W."/>
            <person name="Johnston M."/>
            <person name="Kalman S."/>
            <person name="Kleine K."/>
            <person name="Komp C."/>
            <person name="Kurdi O."/>
            <person name="Lashkari D."/>
            <person name="Lew H."/>
            <person name="Lin A."/>
            <person name="Lin D."/>
            <person name="Louis E.J."/>
            <person name="Marathe R."/>
            <person name="Messenguy F."/>
            <person name="Mewes H.-W."/>
            <person name="Mirtipati S."/>
            <person name="Moestl D."/>
            <person name="Mueller-Auer S."/>
            <person name="Namath A."/>
            <person name="Nentwich U."/>
            <person name="Oefner P."/>
            <person name="Pearson D."/>
            <person name="Petel F.X."/>
            <person name="Pohl T.M."/>
            <person name="Purnelle B."/>
            <person name="Rajandream M.A."/>
            <person name="Rechmann S."/>
            <person name="Rieger M."/>
            <person name="Riles L."/>
            <person name="Roberts D."/>
            <person name="Schaefer M."/>
            <person name="Scharfe M."/>
            <person name="Scherens B."/>
            <person name="Schramm S."/>
            <person name="Schroeder M."/>
            <person name="Sdicu A.-M."/>
            <person name="Tettelin H."/>
            <person name="Urrestarazu L.A."/>
            <person name="Ushinsky S."/>
            <person name="Vierendeels F."/>
            <person name="Vissers S."/>
            <person name="Voss H."/>
            <person name="Walsh S.V."/>
            <person name="Wambutt R."/>
            <person name="Wang Y."/>
            <person name="Wedler E."/>
            <person name="Wedler H."/>
            <person name="Winnett E."/>
            <person name="Zhong W.-W."/>
            <person name="Zollner A."/>
            <person name="Vo D.H."/>
            <person name="Hani J."/>
        </authorList>
    </citation>
    <scope>NUCLEOTIDE SEQUENCE [LARGE SCALE GENOMIC DNA]</scope>
    <source>
        <strain>ATCC 204508 / S288c</strain>
    </source>
</reference>
<reference key="3">
    <citation type="journal article" date="2014" name="G3 (Bethesda)">
        <title>The reference genome sequence of Saccharomyces cerevisiae: Then and now.</title>
        <authorList>
            <person name="Engel S.R."/>
            <person name="Dietrich F.S."/>
            <person name="Fisk D.G."/>
            <person name="Binkley G."/>
            <person name="Balakrishnan R."/>
            <person name="Costanzo M.C."/>
            <person name="Dwight S.S."/>
            <person name="Hitz B.C."/>
            <person name="Karra K."/>
            <person name="Nash R.S."/>
            <person name="Weng S."/>
            <person name="Wong E.D."/>
            <person name="Lloyd P."/>
            <person name="Skrzypek M.S."/>
            <person name="Miyasato S.R."/>
            <person name="Simison M."/>
            <person name="Cherry J.M."/>
        </authorList>
    </citation>
    <scope>GENOME REANNOTATION</scope>
    <source>
        <strain>ATCC 204508 / S288c</strain>
    </source>
</reference>
<reference key="4">
    <citation type="journal article" date="2007" name="Genome Res.">
        <title>Approaching a complete repository of sequence-verified protein-encoding clones for Saccharomyces cerevisiae.</title>
        <authorList>
            <person name="Hu Y."/>
            <person name="Rolfs A."/>
            <person name="Bhullar B."/>
            <person name="Murthy T.V.S."/>
            <person name="Zhu C."/>
            <person name="Berger M.F."/>
            <person name="Camargo A.A."/>
            <person name="Kelley F."/>
            <person name="McCarron S."/>
            <person name="Jepson D."/>
            <person name="Richardson A."/>
            <person name="Raphael J."/>
            <person name="Moreira D."/>
            <person name="Taycher E."/>
            <person name="Zuo D."/>
            <person name="Mohr S."/>
            <person name="Kane M.F."/>
            <person name="Williamson J."/>
            <person name="Simpson A.J.G."/>
            <person name="Bulyk M.L."/>
            <person name="Harlow E."/>
            <person name="Marsischky G."/>
            <person name="Kolodner R.D."/>
            <person name="LaBaer J."/>
        </authorList>
    </citation>
    <scope>NUCLEOTIDE SEQUENCE [GENOMIC DNA]</scope>
    <source>
        <strain>ATCC 204508 / S288c</strain>
    </source>
</reference>
<reference key="5">
    <citation type="journal article" date="2006" name="Proc. Natl. Acad. Sci. U.S.A.">
        <title>A global topology map of the Saccharomyces cerevisiae membrane proteome.</title>
        <authorList>
            <person name="Kim H."/>
            <person name="Melen K."/>
            <person name="Oesterberg M."/>
            <person name="von Heijne G."/>
        </authorList>
    </citation>
    <scope>TOPOLOGY [LARGE SCALE ANALYSIS]</scope>
    <source>
        <strain>ATCC 208353 / W303-1A</strain>
    </source>
</reference>
<reference key="6">
    <citation type="journal article" date="2015" name="Cell Rep.">
        <title>Organization of mitochondrial gene expression in two distinct ribosome-containing assemblies.</title>
        <authorList>
            <person name="Kehrein K."/>
            <person name="Schilling R."/>
            <person name="Moller-Hergt B.V."/>
            <person name="Wurm C.A."/>
            <person name="Jakobs S."/>
            <person name="Lamkemeyer T."/>
            <person name="Langer T."/>
            <person name="Ott M."/>
        </authorList>
    </citation>
    <scope>FUNCTION</scope>
    <scope>SUBUNIT</scope>
</reference>
<reference key="7">
    <citation type="journal article" date="2016" name="Nat. Methods">
        <title>One library to make them all: streamlining the creation of yeast libraries via a SWAp-Tag strategy.</title>
        <authorList>
            <person name="Yofe I."/>
            <person name="Weill U."/>
            <person name="Meurer M."/>
            <person name="Chuartzman S."/>
            <person name="Zalckvar E."/>
            <person name="Goldman O."/>
            <person name="Ben-Dor S."/>
            <person name="Schuetze C."/>
            <person name="Wiedemann N."/>
            <person name="Knop M."/>
            <person name="Khmelinskii A."/>
            <person name="Schuldiner M."/>
        </authorList>
    </citation>
    <scope>SUBCELLULAR LOCATION [LARGE SCALE ANALYSIS]</scope>
</reference>
<name>MRX11_YEAST</name>
<proteinExistence type="evidence at protein level"/>
<keyword id="KW-0472">Membrane</keyword>
<keyword id="KW-0496">Mitochondrion</keyword>
<keyword id="KW-0999">Mitochondrion inner membrane</keyword>
<keyword id="KW-1185">Reference proteome</keyword>
<keyword id="KW-0809">Transit peptide</keyword>
<keyword id="KW-0812">Transmembrane</keyword>
<keyword id="KW-1133">Transmembrane helix</keyword>
<accession>Q03079</accession>
<accession>D6W3X2</accession>
<accession>Q6LE92</accession>
<gene>
    <name evidence="5" type="primary">MRX11</name>
    <name evidence="9" type="ordered locus">YPL041C</name>
</gene>
<protein>
    <recommendedName>
        <fullName evidence="8">MIOREX complex component 11</fullName>
    </recommendedName>
    <alternativeName>
        <fullName evidence="5">Mitochondrial organization of gene expression protein 11</fullName>
    </alternativeName>
</protein>
<sequence>MTVMNLFFRPCQLQMGSGPLELMLKRPTQLTTFMNTRPGGSTQIRFISGNLDPVKRREDRLRKIFSKSRLLTRLNKNPKFSHYFDRLSEAGTVPTLTSFFILHEVTAILPLFLLWWLLYNLDLSDDFKLPNFLNGLMDSCHTAMEKFVGKRYQECLNKNKLILSGTVAYVTVKLLYPVRIFISIWGAPYFGKWLLLPFQKLKHLIKK</sequence>